<organism>
    <name type="scientific">Escherichia coli O157:H7</name>
    <dbReference type="NCBI Taxonomy" id="83334"/>
    <lineage>
        <taxon>Bacteria</taxon>
        <taxon>Pseudomonadati</taxon>
        <taxon>Pseudomonadota</taxon>
        <taxon>Gammaproteobacteria</taxon>
        <taxon>Enterobacterales</taxon>
        <taxon>Enterobacteriaceae</taxon>
        <taxon>Escherichia</taxon>
    </lineage>
</organism>
<feature type="chain" id="PRO_0000196598" description="Glutathione-regulated potassium-efflux system protein KefB">
    <location>
        <begin position="1"/>
        <end position="592"/>
    </location>
</feature>
<feature type="transmembrane region" description="Helical" evidence="1">
    <location>
        <begin position="4"/>
        <end position="24"/>
    </location>
</feature>
<feature type="transmembrane region" description="Helical" evidence="1">
    <location>
        <begin position="29"/>
        <end position="49"/>
    </location>
</feature>
<feature type="transmembrane region" description="Helical" evidence="1">
    <location>
        <begin position="55"/>
        <end position="75"/>
    </location>
</feature>
<feature type="transmembrane region" description="Helical" evidence="1">
    <location>
        <begin position="87"/>
        <end position="107"/>
    </location>
</feature>
<feature type="transmembrane region" description="Helical" evidence="1">
    <location>
        <begin position="115"/>
        <end position="135"/>
    </location>
</feature>
<feature type="transmembrane region" description="Helical" evidence="1">
    <location>
        <begin position="152"/>
        <end position="172"/>
    </location>
</feature>
<feature type="transmembrane region" description="Helical" evidence="1">
    <location>
        <begin position="177"/>
        <end position="197"/>
    </location>
</feature>
<feature type="transmembrane region" description="Helical" evidence="1">
    <location>
        <begin position="207"/>
        <end position="227"/>
    </location>
</feature>
<feature type="transmembrane region" description="Helical" evidence="1">
    <location>
        <begin position="230"/>
        <end position="250"/>
    </location>
</feature>
<feature type="transmembrane region" description="Helical" evidence="1">
    <location>
        <begin position="268"/>
        <end position="288"/>
    </location>
</feature>
<feature type="transmembrane region" description="Helical" evidence="1">
    <location>
        <begin position="291"/>
        <end position="311"/>
    </location>
</feature>
<feature type="transmembrane region" description="Helical" evidence="1">
    <location>
        <begin position="324"/>
        <end position="344"/>
    </location>
</feature>
<feature type="transmembrane region" description="Helical" evidence="1">
    <location>
        <begin position="356"/>
        <end position="376"/>
    </location>
</feature>
<feature type="domain" description="RCK N-terminal" evidence="2">
    <location>
        <begin position="400"/>
        <end position="519"/>
    </location>
</feature>
<gene>
    <name evidence="1" type="primary">kefB</name>
    <name type="ordered locus">Z4710</name>
    <name type="ordered locus">ECs4201</name>
</gene>
<keyword id="KW-0050">Antiport</keyword>
<keyword id="KW-0997">Cell inner membrane</keyword>
<keyword id="KW-1003">Cell membrane</keyword>
<keyword id="KW-0406">Ion transport</keyword>
<keyword id="KW-0472">Membrane</keyword>
<keyword id="KW-0630">Potassium</keyword>
<keyword id="KW-0633">Potassium transport</keyword>
<keyword id="KW-1185">Reference proteome</keyword>
<keyword id="KW-0812">Transmembrane</keyword>
<keyword id="KW-1133">Transmembrane helix</keyword>
<keyword id="KW-0813">Transport</keyword>
<evidence type="ECO:0000255" key="1">
    <source>
        <dbReference type="HAMAP-Rule" id="MF_01412"/>
    </source>
</evidence>
<evidence type="ECO:0000255" key="2">
    <source>
        <dbReference type="PROSITE-ProRule" id="PRU00543"/>
    </source>
</evidence>
<dbReference type="EMBL" id="AE005174">
    <property type="protein sequence ID" value="AAG58458.1"/>
    <property type="molecule type" value="Genomic_DNA"/>
</dbReference>
<dbReference type="EMBL" id="BA000007">
    <property type="protein sequence ID" value="BAB37624.1"/>
    <property type="molecule type" value="Genomic_DNA"/>
</dbReference>
<dbReference type="PIR" id="A91154">
    <property type="entry name" value="A91154"/>
</dbReference>
<dbReference type="PIR" id="F85999">
    <property type="entry name" value="F85999"/>
</dbReference>
<dbReference type="RefSeq" id="NP_312228.1">
    <property type="nucleotide sequence ID" value="NC_002695.1"/>
</dbReference>
<dbReference type="RefSeq" id="WP_000399120.1">
    <property type="nucleotide sequence ID" value="NZ_VOAI01000004.1"/>
</dbReference>
<dbReference type="SMR" id="Q8X878"/>
<dbReference type="STRING" id="155864.Z4710"/>
<dbReference type="GeneID" id="915944"/>
<dbReference type="KEGG" id="ece:Z4710"/>
<dbReference type="KEGG" id="ecs:ECs_4201"/>
<dbReference type="PATRIC" id="fig|386585.9.peg.4385"/>
<dbReference type="eggNOG" id="COG0475">
    <property type="taxonomic scope" value="Bacteria"/>
</dbReference>
<dbReference type="eggNOG" id="COG1226">
    <property type="taxonomic scope" value="Bacteria"/>
</dbReference>
<dbReference type="HOGENOM" id="CLU_005126_9_3_6"/>
<dbReference type="OMA" id="AHFRKLD"/>
<dbReference type="Proteomes" id="UP000000558">
    <property type="component" value="Chromosome"/>
</dbReference>
<dbReference type="Proteomes" id="UP000002519">
    <property type="component" value="Chromosome"/>
</dbReference>
<dbReference type="GO" id="GO:0005886">
    <property type="term" value="C:plasma membrane"/>
    <property type="evidence" value="ECO:0007669"/>
    <property type="project" value="UniProtKB-SubCell"/>
</dbReference>
<dbReference type="GO" id="GO:0015503">
    <property type="term" value="F:glutathione-regulated potassium exporter activity"/>
    <property type="evidence" value="ECO:0007669"/>
    <property type="project" value="UniProtKB-UniRule"/>
</dbReference>
<dbReference type="GO" id="GO:1902600">
    <property type="term" value="P:proton transmembrane transport"/>
    <property type="evidence" value="ECO:0007669"/>
    <property type="project" value="InterPro"/>
</dbReference>
<dbReference type="FunFam" id="1.20.1530.20:FF:000001">
    <property type="entry name" value="Glutathione-regulated potassium-efflux system protein KefB"/>
    <property type="match status" value="1"/>
</dbReference>
<dbReference type="FunFam" id="3.40.50.720:FF:000036">
    <property type="entry name" value="Glutathione-regulated potassium-efflux system protein KefB"/>
    <property type="match status" value="1"/>
</dbReference>
<dbReference type="Gene3D" id="1.20.1530.20">
    <property type="match status" value="1"/>
</dbReference>
<dbReference type="Gene3D" id="3.40.50.720">
    <property type="entry name" value="NAD(P)-binding Rossmann-like Domain"/>
    <property type="match status" value="1"/>
</dbReference>
<dbReference type="HAMAP" id="MF_01412">
    <property type="entry name" value="K_H_efflux_KefB"/>
    <property type="match status" value="1"/>
</dbReference>
<dbReference type="InterPro" id="IPR006153">
    <property type="entry name" value="Cation/H_exchanger_TM"/>
</dbReference>
<dbReference type="InterPro" id="IPR004771">
    <property type="entry name" value="K/H_exchanger"/>
</dbReference>
<dbReference type="InterPro" id="IPR020884">
    <property type="entry name" value="K_H_efflux_KefB"/>
</dbReference>
<dbReference type="InterPro" id="IPR038770">
    <property type="entry name" value="Na+/solute_symporter_sf"/>
</dbReference>
<dbReference type="InterPro" id="IPR036291">
    <property type="entry name" value="NAD(P)-bd_dom_sf"/>
</dbReference>
<dbReference type="InterPro" id="IPR003148">
    <property type="entry name" value="RCK_N"/>
</dbReference>
<dbReference type="NCBIfam" id="TIGR00932">
    <property type="entry name" value="2a37"/>
    <property type="match status" value="1"/>
</dbReference>
<dbReference type="NCBIfam" id="NF002973">
    <property type="entry name" value="PRK03659.1"/>
    <property type="match status" value="1"/>
</dbReference>
<dbReference type="PANTHER" id="PTHR46157">
    <property type="entry name" value="K(+) EFFLUX ANTIPORTER 3, CHLOROPLASTIC"/>
    <property type="match status" value="1"/>
</dbReference>
<dbReference type="PANTHER" id="PTHR46157:SF4">
    <property type="entry name" value="K(+) EFFLUX ANTIPORTER 3, CHLOROPLASTIC"/>
    <property type="match status" value="1"/>
</dbReference>
<dbReference type="Pfam" id="PF00999">
    <property type="entry name" value="Na_H_Exchanger"/>
    <property type="match status" value="1"/>
</dbReference>
<dbReference type="Pfam" id="PF02254">
    <property type="entry name" value="TrkA_N"/>
    <property type="match status" value="1"/>
</dbReference>
<dbReference type="SUPFAM" id="SSF51735">
    <property type="entry name" value="NAD(P)-binding Rossmann-fold domains"/>
    <property type="match status" value="1"/>
</dbReference>
<dbReference type="PROSITE" id="PS51201">
    <property type="entry name" value="RCK_N"/>
    <property type="match status" value="1"/>
</dbReference>
<protein>
    <recommendedName>
        <fullName evidence="1">Glutathione-regulated potassium-efflux system protein KefB</fullName>
    </recommendedName>
    <alternativeName>
        <fullName evidence="1">K(+)/H(+) antiporter</fullName>
    </alternativeName>
</protein>
<name>KEFB_ECO57</name>
<sequence>MEGSDFLLAGVLFLFAAVAAVPLASRLGIGAVLGYLLAGIAIGPWGLGFISDVDEILHFSELGVVFLMFIIGLELNPSKLWQLRRSIFGVGAAQVLLSAALLAGLLMLTDFAWQAAVVGGIGLAMSSTAMALQLMREKGMNRSESGQLGFSVLLFQDLAVIPALALVPLLAGSADEHFDWMKIGMKVLAFVGMLIGGRYLLRPVFRFIAASGVREVFTAATLLLVLGSALFMDALGLSMALGTFIAGVLLAESEYRHELETAIDPFKGLLLGLFFISVGMSLNLGVLYTHLLWVVISVVVLVAVKILVLYLLARLYGVRSSERMQFAGVLSQGGEFAFVLFSTASSQRLFQGDQMALLLVTVTLSMMTTPLLMKLVDKWLSRQFNGPEEEDEKPWVNDDKPQVIVVGFGRFGQVIGRLLMANKMRITVLERDISAVNLMRKYGYKVYYGDATQVDLLRSAGAEAAESIVITCNEPEDTMKLVEICQQHFPHLHILARARGRVEAHELLQAGVTQFSRETFSSALELGRKTLVTLGMHPHQAQRAQLHFRRLDMRMLRELIPMHADTVQISRAREARRELEEIFQREMQQERR</sequence>
<proteinExistence type="inferred from homology"/>
<comment type="function">
    <text evidence="1">Pore-forming subunit of a potassium efflux system that confers protection against electrophiles. Catalyzes K(+)/H(+) antiport.</text>
</comment>
<comment type="subunit">
    <text evidence="1">Interacts with the regulatory subunit KefG.</text>
</comment>
<comment type="subcellular location">
    <subcellularLocation>
        <location evidence="1">Cell inner membrane</location>
        <topology evidence="1">Multi-pass membrane protein</topology>
    </subcellularLocation>
</comment>
<comment type="similarity">
    <text evidence="1">Belongs to the monovalent cation:proton antiporter 2 (CPA2) transporter (TC 2.A.37) family. KefB subfamily.</text>
</comment>
<reference key="1">
    <citation type="journal article" date="2001" name="Nature">
        <title>Genome sequence of enterohaemorrhagic Escherichia coli O157:H7.</title>
        <authorList>
            <person name="Perna N.T."/>
            <person name="Plunkett G. III"/>
            <person name="Burland V."/>
            <person name="Mau B."/>
            <person name="Glasner J.D."/>
            <person name="Rose D.J."/>
            <person name="Mayhew G.F."/>
            <person name="Evans P.S."/>
            <person name="Gregor J."/>
            <person name="Kirkpatrick H.A."/>
            <person name="Posfai G."/>
            <person name="Hackett J."/>
            <person name="Klink S."/>
            <person name="Boutin A."/>
            <person name="Shao Y."/>
            <person name="Miller L."/>
            <person name="Grotbeck E.J."/>
            <person name="Davis N.W."/>
            <person name="Lim A."/>
            <person name="Dimalanta E.T."/>
            <person name="Potamousis K."/>
            <person name="Apodaca J."/>
            <person name="Anantharaman T.S."/>
            <person name="Lin J."/>
            <person name="Yen G."/>
            <person name="Schwartz D.C."/>
            <person name="Welch R.A."/>
            <person name="Blattner F.R."/>
        </authorList>
    </citation>
    <scope>NUCLEOTIDE SEQUENCE [LARGE SCALE GENOMIC DNA]</scope>
    <source>
        <strain>O157:H7 / EDL933 / ATCC 700927 / EHEC</strain>
    </source>
</reference>
<reference key="2">
    <citation type="journal article" date="2001" name="DNA Res.">
        <title>Complete genome sequence of enterohemorrhagic Escherichia coli O157:H7 and genomic comparison with a laboratory strain K-12.</title>
        <authorList>
            <person name="Hayashi T."/>
            <person name="Makino K."/>
            <person name="Ohnishi M."/>
            <person name="Kurokawa K."/>
            <person name="Ishii K."/>
            <person name="Yokoyama K."/>
            <person name="Han C.-G."/>
            <person name="Ohtsubo E."/>
            <person name="Nakayama K."/>
            <person name="Murata T."/>
            <person name="Tanaka M."/>
            <person name="Tobe T."/>
            <person name="Iida T."/>
            <person name="Takami H."/>
            <person name="Honda T."/>
            <person name="Sasakawa C."/>
            <person name="Ogasawara N."/>
            <person name="Yasunaga T."/>
            <person name="Kuhara S."/>
            <person name="Shiba T."/>
            <person name="Hattori M."/>
            <person name="Shinagawa H."/>
        </authorList>
    </citation>
    <scope>NUCLEOTIDE SEQUENCE [LARGE SCALE GENOMIC DNA]</scope>
    <source>
        <strain>O157:H7 / Sakai / RIMD 0509952 / EHEC</strain>
    </source>
</reference>
<accession>Q8X878</accession>